<protein>
    <recommendedName>
        <fullName evidence="3">Small ribosomal subunit protein uS8c</fullName>
    </recommendedName>
    <alternativeName>
        <fullName>30S ribosomal protein S8, chloroplastic</fullName>
    </alternativeName>
</protein>
<comment type="function">
    <text evidence="1">One of the primary rRNA binding proteins, it binds directly to 16S rRNA central domain where it helps coordinate assembly of the platform of the 30S subunit.</text>
</comment>
<comment type="subunit">
    <text evidence="1">Part of the 30S ribosomal subunit.</text>
</comment>
<comment type="subcellular location">
    <subcellularLocation>
        <location>Plastid</location>
        <location>Chloroplast</location>
    </subcellularLocation>
</comment>
<comment type="similarity">
    <text evidence="3">Belongs to the universal ribosomal protein uS8 family.</text>
</comment>
<organism>
    <name type="scientific">Selaginella uncinata</name>
    <name type="common">Blue spike-moss</name>
    <name type="synonym">Lycopodium uncinatum</name>
    <dbReference type="NCBI Taxonomy" id="307165"/>
    <lineage>
        <taxon>Eukaryota</taxon>
        <taxon>Viridiplantae</taxon>
        <taxon>Streptophyta</taxon>
        <taxon>Embryophyta</taxon>
        <taxon>Tracheophyta</taxon>
        <taxon>Lycopodiopsida</taxon>
        <taxon>Selaginellales</taxon>
        <taxon>Selaginellaceae</taxon>
        <taxon>Selaginella</taxon>
    </lineage>
</organism>
<name>RR8_SELUN</name>
<accession>Q2WGF1</accession>
<feature type="chain" id="PRO_0000290992" description="Small ribosomal subunit protein uS8c">
    <location>
        <begin position="1"/>
        <end position="133"/>
    </location>
</feature>
<feature type="region of interest" description="Disordered" evidence="2">
    <location>
        <begin position="1"/>
        <end position="23"/>
    </location>
</feature>
<feature type="region of interest" description="Disordered" evidence="2">
    <location>
        <begin position="44"/>
        <end position="133"/>
    </location>
</feature>
<feature type="compositionally biased region" description="Polar residues" evidence="2">
    <location>
        <begin position="12"/>
        <end position="23"/>
    </location>
</feature>
<feature type="compositionally biased region" description="Polar residues" evidence="2">
    <location>
        <begin position="55"/>
        <end position="66"/>
    </location>
</feature>
<feature type="compositionally biased region" description="Basic residues" evidence="2">
    <location>
        <begin position="67"/>
        <end position="81"/>
    </location>
</feature>
<feature type="compositionally biased region" description="Basic and acidic residues" evidence="2">
    <location>
        <begin position="114"/>
        <end position="133"/>
    </location>
</feature>
<keyword id="KW-0150">Chloroplast</keyword>
<keyword id="KW-0934">Plastid</keyword>
<keyword id="KW-0687">Ribonucleoprotein</keyword>
<keyword id="KW-0689">Ribosomal protein</keyword>
<keyword id="KW-0694">RNA-binding</keyword>
<keyword id="KW-0699">rRNA-binding</keyword>
<evidence type="ECO:0000250" key="1"/>
<evidence type="ECO:0000256" key="2">
    <source>
        <dbReference type="SAM" id="MobiDB-lite"/>
    </source>
</evidence>
<evidence type="ECO:0000305" key="3"/>
<proteinExistence type="inferred from homology"/>
<reference key="1">
    <citation type="journal article" date="2007" name="J. Plant Res.">
        <title>The chloroplast genome from a lycophyte (microphyllophyte), Selaginella uncinata, has a unique inversion, transpositions and many gene losses.</title>
        <authorList>
            <person name="Tsuji S."/>
            <person name="Ueda K."/>
            <person name="Nishiyama T."/>
            <person name="Hasebe M."/>
            <person name="Yoshikawa S."/>
            <person name="Konagaya A."/>
            <person name="Nishiuchi T."/>
            <person name="Yamaguchi K."/>
        </authorList>
    </citation>
    <scope>NUCLEOTIDE SEQUENCE [LARGE SCALE GENOMIC DNA]</scope>
</reference>
<sequence length="133" mass="14515">MGNDAIDDVTTAPRNASSRGAETVRVSSTDITISIGRVLVEEGFSGNPREHRQGTNRFPVSTSKYQGRTRKARITTRRRVSKPGLRIYPGYKDIPEVSGGIGTATPPTPGGTTTDREARQKRIGGEAPRHVWR</sequence>
<gene>
    <name type="primary">rps8</name>
</gene>
<dbReference type="EMBL" id="AB197035">
    <property type="protein sequence ID" value="BAE00225.1"/>
    <property type="molecule type" value="Genomic_DNA"/>
</dbReference>
<dbReference type="RefSeq" id="YP_009584204.1">
    <property type="nucleotide sequence ID" value="NC_041575.1"/>
</dbReference>
<dbReference type="SMR" id="Q2WGF1"/>
<dbReference type="GeneID" id="39713349"/>
<dbReference type="GO" id="GO:0009507">
    <property type="term" value="C:chloroplast"/>
    <property type="evidence" value="ECO:0007669"/>
    <property type="project" value="UniProtKB-SubCell"/>
</dbReference>
<dbReference type="GO" id="GO:1990904">
    <property type="term" value="C:ribonucleoprotein complex"/>
    <property type="evidence" value="ECO:0007669"/>
    <property type="project" value="UniProtKB-KW"/>
</dbReference>
<dbReference type="GO" id="GO:0005840">
    <property type="term" value="C:ribosome"/>
    <property type="evidence" value="ECO:0007669"/>
    <property type="project" value="UniProtKB-KW"/>
</dbReference>
<dbReference type="GO" id="GO:0019843">
    <property type="term" value="F:rRNA binding"/>
    <property type="evidence" value="ECO:0007669"/>
    <property type="project" value="UniProtKB-UniRule"/>
</dbReference>
<dbReference type="GO" id="GO:0003735">
    <property type="term" value="F:structural constituent of ribosome"/>
    <property type="evidence" value="ECO:0007669"/>
    <property type="project" value="InterPro"/>
</dbReference>
<dbReference type="GO" id="GO:0006412">
    <property type="term" value="P:translation"/>
    <property type="evidence" value="ECO:0007669"/>
    <property type="project" value="UniProtKB-UniRule"/>
</dbReference>
<dbReference type="FunFam" id="3.30.1490.10:FF:000001">
    <property type="entry name" value="30S ribosomal protein S8"/>
    <property type="match status" value="1"/>
</dbReference>
<dbReference type="Gene3D" id="3.30.1370.30">
    <property type="match status" value="1"/>
</dbReference>
<dbReference type="Gene3D" id="3.30.1490.10">
    <property type="match status" value="1"/>
</dbReference>
<dbReference type="HAMAP" id="MF_01302_B">
    <property type="entry name" value="Ribosomal_uS8_B"/>
    <property type="match status" value="1"/>
</dbReference>
<dbReference type="InterPro" id="IPR000630">
    <property type="entry name" value="Ribosomal_uS8"/>
</dbReference>
<dbReference type="InterPro" id="IPR035987">
    <property type="entry name" value="Ribosomal_uS8_sf"/>
</dbReference>
<dbReference type="PANTHER" id="PTHR11758">
    <property type="entry name" value="40S RIBOSOMAL PROTEIN S15A"/>
    <property type="match status" value="1"/>
</dbReference>
<dbReference type="Pfam" id="PF00410">
    <property type="entry name" value="Ribosomal_S8"/>
    <property type="match status" value="1"/>
</dbReference>
<dbReference type="SUPFAM" id="SSF56047">
    <property type="entry name" value="Ribosomal protein S8"/>
    <property type="match status" value="1"/>
</dbReference>
<geneLocation type="chloroplast"/>